<feature type="signal peptide" evidence="2">
    <location>
        <begin position="1"/>
        <end position="21"/>
    </location>
</feature>
<feature type="chain" id="PRO_0000031015" description="Multidrug resistance outer membrane protein MdtQ">
    <location>
        <begin position="22"/>
        <end position="478"/>
    </location>
</feature>
<feature type="lipid moiety-binding region" description="N-palmitoyl cysteine" evidence="2">
    <location>
        <position position="22"/>
    </location>
</feature>
<feature type="lipid moiety-binding region" description="S-diacylglycerol cysteine" evidence="2">
    <location>
        <position position="22"/>
    </location>
</feature>
<accession>Q8FFV6</accession>
<gene>
    <name type="primary">mdtQ</name>
    <name type="ordered locus">c2671</name>
</gene>
<dbReference type="EMBL" id="AE014075">
    <property type="protein sequence ID" value="AAN81127.1"/>
    <property type="status" value="ALT_INIT"/>
    <property type="molecule type" value="Genomic_DNA"/>
</dbReference>
<dbReference type="RefSeq" id="WP_001078151.1">
    <property type="nucleotide sequence ID" value="NZ_CP051263.1"/>
</dbReference>
<dbReference type="SMR" id="Q8FFV6"/>
<dbReference type="STRING" id="199310.c2671"/>
<dbReference type="KEGG" id="ecc:c2671"/>
<dbReference type="eggNOG" id="COG1538">
    <property type="taxonomic scope" value="Bacteria"/>
</dbReference>
<dbReference type="HOGENOM" id="CLU_012817_6_3_6"/>
<dbReference type="Proteomes" id="UP000001410">
    <property type="component" value="Chromosome"/>
</dbReference>
<dbReference type="GO" id="GO:0009279">
    <property type="term" value="C:cell outer membrane"/>
    <property type="evidence" value="ECO:0007669"/>
    <property type="project" value="UniProtKB-SubCell"/>
</dbReference>
<dbReference type="GO" id="GO:0015562">
    <property type="term" value="F:efflux transmembrane transporter activity"/>
    <property type="evidence" value="ECO:0007669"/>
    <property type="project" value="InterPro"/>
</dbReference>
<dbReference type="GO" id="GO:0046677">
    <property type="term" value="P:response to antibiotic"/>
    <property type="evidence" value="ECO:0007669"/>
    <property type="project" value="UniProtKB-KW"/>
</dbReference>
<dbReference type="Gene3D" id="1.20.1600.10">
    <property type="entry name" value="Outer membrane efflux proteins (OEP)"/>
    <property type="match status" value="1"/>
</dbReference>
<dbReference type="Gene3D" id="2.20.200.10">
    <property type="entry name" value="Outer membrane efflux proteins (OEP)"/>
    <property type="match status" value="1"/>
</dbReference>
<dbReference type="InterPro" id="IPR050737">
    <property type="entry name" value="OMF"/>
</dbReference>
<dbReference type="InterPro" id="IPR003423">
    <property type="entry name" value="OMP_efflux"/>
</dbReference>
<dbReference type="InterPro" id="IPR010131">
    <property type="entry name" value="RND_efflux_OM_lipoprot_NodT"/>
</dbReference>
<dbReference type="NCBIfam" id="TIGR01845">
    <property type="entry name" value="outer_NodT"/>
    <property type="match status" value="1"/>
</dbReference>
<dbReference type="NCBIfam" id="NF008524">
    <property type="entry name" value="PRK11459.1"/>
    <property type="match status" value="1"/>
</dbReference>
<dbReference type="PANTHER" id="PTHR30203:SF20">
    <property type="entry name" value="MULTIDRUG RESISTANCE OUTER MEMBRANE PROTEIN MDTP-RELATED"/>
    <property type="match status" value="1"/>
</dbReference>
<dbReference type="PANTHER" id="PTHR30203">
    <property type="entry name" value="OUTER MEMBRANE CATION EFFLUX PROTEIN"/>
    <property type="match status" value="1"/>
</dbReference>
<dbReference type="Pfam" id="PF02321">
    <property type="entry name" value="OEP"/>
    <property type="match status" value="2"/>
</dbReference>
<dbReference type="SUPFAM" id="SSF56954">
    <property type="entry name" value="Outer membrane efflux proteins (OEP)"/>
    <property type="match status" value="1"/>
</dbReference>
<dbReference type="PROSITE" id="PS51257">
    <property type="entry name" value="PROKAR_LIPOPROTEIN"/>
    <property type="match status" value="1"/>
</dbReference>
<protein>
    <recommendedName>
        <fullName>Multidrug resistance outer membrane protein MdtQ</fullName>
    </recommendedName>
</protein>
<proteinExistence type="inferred from homology"/>
<sequence length="478" mass="52208">MNRDSFYPAIACFPLLLMLAGCAPMHETRQALSQQTPAAQVDTALPTALKNGWPDSQWWLEYHDNQLTSLINNALQSAPDMQVAEQRIQLAEAQAKAVATQDGPQLDFSADMERQKMSAEGLMGPFALNDPAAGTTGPWYTNGTFGLTAGWHLDIWGKNRAEITARLGTVKARAAEREQTRQLLAGSVARLYWEWQTQAALNTVLQQIEKEQNTIIATDRQLYQNGITSSVEGVETDINASKTRQQLNDVAGKMKIIEARLNALTNHQTKSLKLKTVALPKVASQLPDELGYSLLARRADLQAAHWYVESSLSTIDAAKAAFYPDINLMAFLQQDALHLSDLFRHSAQQMGVTAGLTLPIFDSGRLNANLDIAKAESNLSIASYNKAVVEAVNDVARAASQVQTLAEKNQHQAQIERDALRVVGLAQARFNAGLIAGSRVSEARIPALRERANGLLLQGQWLDASIQLTGALGGGYKR</sequence>
<name>MDTQ_ECOL6</name>
<organism>
    <name type="scientific">Escherichia coli O6:H1 (strain CFT073 / ATCC 700928 / UPEC)</name>
    <dbReference type="NCBI Taxonomy" id="199310"/>
    <lineage>
        <taxon>Bacteria</taxon>
        <taxon>Pseudomonadati</taxon>
        <taxon>Pseudomonadota</taxon>
        <taxon>Gammaproteobacteria</taxon>
        <taxon>Enterobacterales</taxon>
        <taxon>Enterobacteriaceae</taxon>
        <taxon>Escherichia</taxon>
    </lineage>
</organism>
<reference key="1">
    <citation type="journal article" date="2002" name="Proc. Natl. Acad. Sci. U.S.A.">
        <title>Extensive mosaic structure revealed by the complete genome sequence of uropathogenic Escherichia coli.</title>
        <authorList>
            <person name="Welch R.A."/>
            <person name="Burland V."/>
            <person name="Plunkett G. III"/>
            <person name="Redford P."/>
            <person name="Roesch P."/>
            <person name="Rasko D."/>
            <person name="Buckles E.L."/>
            <person name="Liou S.-R."/>
            <person name="Boutin A."/>
            <person name="Hackett J."/>
            <person name="Stroud D."/>
            <person name="Mayhew G.F."/>
            <person name="Rose D.J."/>
            <person name="Zhou S."/>
            <person name="Schwartz D.C."/>
            <person name="Perna N.T."/>
            <person name="Mobley H.L.T."/>
            <person name="Donnenberg M.S."/>
            <person name="Blattner F.R."/>
        </authorList>
    </citation>
    <scope>NUCLEOTIDE SEQUENCE [LARGE SCALE GENOMIC DNA]</scope>
    <source>
        <strain>CFT073 / ATCC 700928 / UPEC</strain>
    </source>
</reference>
<comment type="function">
    <text evidence="1">Could be involved in resistance to puromycin, acriflavine and tetraphenylarsonium chloride.</text>
</comment>
<comment type="subcellular location">
    <subcellularLocation>
        <location evidence="3">Cell outer membrane</location>
        <topology evidence="2">Lipid-anchor</topology>
    </subcellularLocation>
</comment>
<comment type="similarity">
    <text evidence="3">Belongs to the outer membrane factor (OMF) (TC 1.B.17) family.</text>
</comment>
<comment type="sequence caution" evidence="3">
    <conflict type="erroneous initiation">
        <sequence resource="EMBL-CDS" id="AAN81127"/>
    </conflict>
</comment>
<evidence type="ECO:0000250" key="1"/>
<evidence type="ECO:0000255" key="2">
    <source>
        <dbReference type="PROSITE-ProRule" id="PRU00303"/>
    </source>
</evidence>
<evidence type="ECO:0000305" key="3"/>
<keyword id="KW-0046">Antibiotic resistance</keyword>
<keyword id="KW-0998">Cell outer membrane</keyword>
<keyword id="KW-0449">Lipoprotein</keyword>
<keyword id="KW-0472">Membrane</keyword>
<keyword id="KW-0564">Palmitate</keyword>
<keyword id="KW-1185">Reference proteome</keyword>
<keyword id="KW-0732">Signal</keyword>
<keyword id="KW-0812">Transmembrane</keyword>
<keyword id="KW-1134">Transmembrane beta strand</keyword>